<keyword id="KW-0963">Cytoplasm</keyword>
<keyword id="KW-0444">Lipid biosynthesis</keyword>
<keyword id="KW-0443">Lipid metabolism</keyword>
<keyword id="KW-0594">Phospholipid biosynthesis</keyword>
<keyword id="KW-1208">Phospholipid metabolism</keyword>
<keyword id="KW-0808">Transferase</keyword>
<dbReference type="EC" id="2.3.1.274" evidence="1"/>
<dbReference type="EMBL" id="CP001215">
    <property type="protein sequence ID" value="ACP12946.1"/>
    <property type="molecule type" value="Genomic_DNA"/>
</dbReference>
<dbReference type="RefSeq" id="WP_000684111.1">
    <property type="nucleotide sequence ID" value="NC_012581.1"/>
</dbReference>
<dbReference type="SMR" id="C3L774"/>
<dbReference type="GeneID" id="45023681"/>
<dbReference type="KEGG" id="bah:BAMEG_0640"/>
<dbReference type="HOGENOM" id="CLU_039379_1_1_9"/>
<dbReference type="UniPathway" id="UPA00085"/>
<dbReference type="GO" id="GO:0005737">
    <property type="term" value="C:cytoplasm"/>
    <property type="evidence" value="ECO:0007669"/>
    <property type="project" value="UniProtKB-SubCell"/>
</dbReference>
<dbReference type="GO" id="GO:0043811">
    <property type="term" value="F:phosphate:acyl-[acyl carrier protein] acyltransferase activity"/>
    <property type="evidence" value="ECO:0007669"/>
    <property type="project" value="UniProtKB-UniRule"/>
</dbReference>
<dbReference type="GO" id="GO:0006633">
    <property type="term" value="P:fatty acid biosynthetic process"/>
    <property type="evidence" value="ECO:0007669"/>
    <property type="project" value="UniProtKB-UniRule"/>
</dbReference>
<dbReference type="GO" id="GO:0008654">
    <property type="term" value="P:phospholipid biosynthetic process"/>
    <property type="evidence" value="ECO:0007669"/>
    <property type="project" value="UniProtKB-KW"/>
</dbReference>
<dbReference type="Gene3D" id="3.40.718.10">
    <property type="entry name" value="Isopropylmalate Dehydrogenase"/>
    <property type="match status" value="1"/>
</dbReference>
<dbReference type="HAMAP" id="MF_00019">
    <property type="entry name" value="PlsX"/>
    <property type="match status" value="1"/>
</dbReference>
<dbReference type="InterPro" id="IPR003664">
    <property type="entry name" value="FA_synthesis"/>
</dbReference>
<dbReference type="InterPro" id="IPR012281">
    <property type="entry name" value="Phospholipid_synth_PlsX-like"/>
</dbReference>
<dbReference type="NCBIfam" id="TIGR00182">
    <property type="entry name" value="plsX"/>
    <property type="match status" value="1"/>
</dbReference>
<dbReference type="PANTHER" id="PTHR30100">
    <property type="entry name" value="FATTY ACID/PHOSPHOLIPID SYNTHESIS PROTEIN PLSX"/>
    <property type="match status" value="1"/>
</dbReference>
<dbReference type="PANTHER" id="PTHR30100:SF1">
    <property type="entry name" value="PHOSPHATE ACYLTRANSFERASE"/>
    <property type="match status" value="1"/>
</dbReference>
<dbReference type="Pfam" id="PF02504">
    <property type="entry name" value="FA_synthesis"/>
    <property type="match status" value="1"/>
</dbReference>
<dbReference type="PIRSF" id="PIRSF002465">
    <property type="entry name" value="Phsphlp_syn_PlsX"/>
    <property type="match status" value="1"/>
</dbReference>
<dbReference type="SUPFAM" id="SSF53659">
    <property type="entry name" value="Isocitrate/Isopropylmalate dehydrogenase-like"/>
    <property type="match status" value="1"/>
</dbReference>
<comment type="function">
    <text evidence="1">Catalyzes the reversible formation of acyl-phosphate (acyl-PO(4)) from acyl-[acyl-carrier-protein] (acyl-ACP). This enzyme utilizes acyl-ACP as fatty acyl donor, but not acyl-CoA.</text>
</comment>
<comment type="catalytic activity">
    <reaction evidence="1">
        <text>a fatty acyl-[ACP] + phosphate = an acyl phosphate + holo-[ACP]</text>
        <dbReference type="Rhea" id="RHEA:42292"/>
        <dbReference type="Rhea" id="RHEA-COMP:9685"/>
        <dbReference type="Rhea" id="RHEA-COMP:14125"/>
        <dbReference type="ChEBI" id="CHEBI:43474"/>
        <dbReference type="ChEBI" id="CHEBI:59918"/>
        <dbReference type="ChEBI" id="CHEBI:64479"/>
        <dbReference type="ChEBI" id="CHEBI:138651"/>
        <dbReference type="EC" id="2.3.1.274"/>
    </reaction>
</comment>
<comment type="pathway">
    <text evidence="1">Lipid metabolism; phospholipid metabolism.</text>
</comment>
<comment type="subunit">
    <text evidence="1">Homodimer. Probably interacts with PlsY.</text>
</comment>
<comment type="subcellular location">
    <subcellularLocation>
        <location evidence="1">Cytoplasm</location>
    </subcellularLocation>
    <text evidence="1">Associated with the membrane possibly through PlsY.</text>
</comment>
<comment type="similarity">
    <text evidence="1">Belongs to the PlsX family.</text>
</comment>
<name>PLSX_BACAC</name>
<feature type="chain" id="PRO_1000193124" description="Phosphate acyltransferase">
    <location>
        <begin position="1"/>
        <end position="330"/>
    </location>
</feature>
<organism>
    <name type="scientific">Bacillus anthracis (strain CDC 684 / NRRL 3495)</name>
    <dbReference type="NCBI Taxonomy" id="568206"/>
    <lineage>
        <taxon>Bacteria</taxon>
        <taxon>Bacillati</taxon>
        <taxon>Bacillota</taxon>
        <taxon>Bacilli</taxon>
        <taxon>Bacillales</taxon>
        <taxon>Bacillaceae</taxon>
        <taxon>Bacillus</taxon>
        <taxon>Bacillus cereus group</taxon>
    </lineage>
</organism>
<accession>C3L774</accession>
<sequence length="330" mass="35344">MKIAIDAMGGDHAPKAVVLGAMKAIKEYSDLHITLVGKEEEIRQYLTSEERITILHTDEKIESTDEPVRAVRRKKQASMVLAAQQVKDGVADACISAGSTGALMAAGLFVVGRMEGIERPALSPTMPTVDGEGFVMLDVGANVDAKPIHLYQYAVMGSVYAEKVRGIKNPRVGLLNVGTEGGKGNELSKQVFAMLKDAPINFVGNVESRDLLQGVADVVVCDGFTGNVALKSLEGTALALFSMLKEQLMSSFTSKLAAAVLKPKLMVLKDKMDYSEYGGAALFGLKAPVIKAHGSSNDQSIFSAIRQTREMVAKEVIPTISSVMEKEPLQ</sequence>
<evidence type="ECO:0000255" key="1">
    <source>
        <dbReference type="HAMAP-Rule" id="MF_00019"/>
    </source>
</evidence>
<proteinExistence type="inferred from homology"/>
<protein>
    <recommendedName>
        <fullName evidence="1">Phosphate acyltransferase</fullName>
        <ecNumber evidence="1">2.3.1.274</ecNumber>
    </recommendedName>
    <alternativeName>
        <fullName evidence="1">Acyl-ACP phosphotransacylase</fullName>
    </alternativeName>
    <alternativeName>
        <fullName evidence="1">Acyl-[acyl-carrier-protein]--phosphate acyltransferase</fullName>
    </alternativeName>
    <alternativeName>
        <fullName evidence="1">Phosphate-acyl-ACP acyltransferase</fullName>
    </alternativeName>
</protein>
<gene>
    <name evidence="1" type="primary">plsX</name>
    <name type="ordered locus">BAMEG_0640</name>
</gene>
<reference key="1">
    <citation type="submission" date="2008-10" db="EMBL/GenBank/DDBJ databases">
        <title>Genome sequence of Bacillus anthracis str. CDC 684.</title>
        <authorList>
            <person name="Dodson R.J."/>
            <person name="Munk A.C."/>
            <person name="Brettin T."/>
            <person name="Bruce D."/>
            <person name="Detter C."/>
            <person name="Tapia R."/>
            <person name="Han C."/>
            <person name="Sutton G."/>
            <person name="Sims D."/>
        </authorList>
    </citation>
    <scope>NUCLEOTIDE SEQUENCE [LARGE SCALE GENOMIC DNA]</scope>
    <source>
        <strain>CDC 684 / NRRL 3495</strain>
    </source>
</reference>